<organism>
    <name type="scientific">Staphylococcus epidermidis (strain ATCC 12228 / FDA PCI 1200)</name>
    <dbReference type="NCBI Taxonomy" id="176280"/>
    <lineage>
        <taxon>Bacteria</taxon>
        <taxon>Bacillati</taxon>
        <taxon>Bacillota</taxon>
        <taxon>Bacilli</taxon>
        <taxon>Bacillales</taxon>
        <taxon>Staphylococcaceae</taxon>
        <taxon>Staphylococcus</taxon>
    </lineage>
</organism>
<comment type="function">
    <text evidence="1">Cell wall formation. Catalyzes the addition of glutamate to the nucleotide precursor UDP-N-acetylmuramoyl-L-alanine (UMA).</text>
</comment>
<comment type="catalytic activity">
    <reaction evidence="1">
        <text>UDP-N-acetyl-alpha-D-muramoyl-L-alanine + D-glutamate + ATP = UDP-N-acetyl-alpha-D-muramoyl-L-alanyl-D-glutamate + ADP + phosphate + H(+)</text>
        <dbReference type="Rhea" id="RHEA:16429"/>
        <dbReference type="ChEBI" id="CHEBI:15378"/>
        <dbReference type="ChEBI" id="CHEBI:29986"/>
        <dbReference type="ChEBI" id="CHEBI:30616"/>
        <dbReference type="ChEBI" id="CHEBI:43474"/>
        <dbReference type="ChEBI" id="CHEBI:83898"/>
        <dbReference type="ChEBI" id="CHEBI:83900"/>
        <dbReference type="ChEBI" id="CHEBI:456216"/>
        <dbReference type="EC" id="6.3.2.9"/>
    </reaction>
</comment>
<comment type="pathway">
    <text evidence="1">Cell wall biogenesis; peptidoglycan biosynthesis.</text>
</comment>
<comment type="subcellular location">
    <subcellularLocation>
        <location evidence="1">Cytoplasm</location>
    </subcellularLocation>
</comment>
<comment type="similarity">
    <text evidence="1">Belongs to the MurCDEF family.</text>
</comment>
<gene>
    <name evidence="1" type="primary">murD</name>
    <name type="ordered locus">SE_0858</name>
</gene>
<sequence length="449" mass="50149">MLNYTELENKNVLVVGLAKSGYEAAKLLLKLGANVKVNDGKDLSQDAHAKDLESMGIEVISGSHPFSLLDDDPIIVKNPGIPYTVSIIKEATNRGLKILTEVELSYLISEAPIIAVTGTNGKTTVTSLIGDMFQKSVLTGRLSGNIGYVASKVAQEVKSDEYLITELSSFQLLGIEEYKPHIAIITNIYSAHLDYHETLENYQNAKKQIYKNQTKDDYLICNYHQRHLIESENLEAKTFYFSTQQEVDGIYIKDGFIVFNGIRIINTKDLVLPGEHNLENILAAVLASIIAGVPVKAIVDSLVTFSGIDHRLQYIGTNRTNKYYNDSKATNTLATQFALNSFDQPIIWLCGGLDRGNEFDELIPYMENVRVMVVFGETQDKFAKLGNSQGKYVIKATDVEDAVDKIQDIVEPNDVVLLSPACASWDQYHTFEERGEKFIDRFRAHLPSY</sequence>
<keyword id="KW-0067">ATP-binding</keyword>
<keyword id="KW-0131">Cell cycle</keyword>
<keyword id="KW-0132">Cell division</keyword>
<keyword id="KW-0133">Cell shape</keyword>
<keyword id="KW-0961">Cell wall biogenesis/degradation</keyword>
<keyword id="KW-0963">Cytoplasm</keyword>
<keyword id="KW-0436">Ligase</keyword>
<keyword id="KW-0547">Nucleotide-binding</keyword>
<keyword id="KW-0573">Peptidoglycan synthesis</keyword>
<name>MURD_STAES</name>
<proteinExistence type="inferred from homology"/>
<protein>
    <recommendedName>
        <fullName evidence="1">UDP-N-acetylmuramoylalanine--D-glutamate ligase</fullName>
        <ecNumber evidence="1">6.3.2.9</ecNumber>
    </recommendedName>
    <alternativeName>
        <fullName evidence="1">D-glutamic acid-adding enzyme</fullName>
    </alternativeName>
    <alternativeName>
        <fullName evidence="1">UDP-N-acetylmuramoyl-L-alanyl-D-glutamate synthetase</fullName>
    </alternativeName>
</protein>
<evidence type="ECO:0000255" key="1">
    <source>
        <dbReference type="HAMAP-Rule" id="MF_00639"/>
    </source>
</evidence>
<accession>Q8CSX6</accession>
<dbReference type="EC" id="6.3.2.9" evidence="1"/>
<dbReference type="EMBL" id="AE015929">
    <property type="protein sequence ID" value="AAO04455.1"/>
    <property type="molecule type" value="Genomic_DNA"/>
</dbReference>
<dbReference type="RefSeq" id="NP_764413.1">
    <property type="nucleotide sequence ID" value="NC_004461.1"/>
</dbReference>
<dbReference type="RefSeq" id="WP_001830127.1">
    <property type="nucleotide sequence ID" value="NZ_WBME01000036.1"/>
</dbReference>
<dbReference type="SMR" id="Q8CSX6"/>
<dbReference type="GeneID" id="50019003"/>
<dbReference type="KEGG" id="sep:SE_0858"/>
<dbReference type="PATRIC" id="fig|176280.10.peg.831"/>
<dbReference type="eggNOG" id="COG0771">
    <property type="taxonomic scope" value="Bacteria"/>
</dbReference>
<dbReference type="HOGENOM" id="CLU_032540_0_1_9"/>
<dbReference type="OrthoDB" id="9809796at2"/>
<dbReference type="UniPathway" id="UPA00219"/>
<dbReference type="Proteomes" id="UP000001411">
    <property type="component" value="Chromosome"/>
</dbReference>
<dbReference type="GO" id="GO:0005737">
    <property type="term" value="C:cytoplasm"/>
    <property type="evidence" value="ECO:0007669"/>
    <property type="project" value="UniProtKB-SubCell"/>
</dbReference>
<dbReference type="GO" id="GO:0005524">
    <property type="term" value="F:ATP binding"/>
    <property type="evidence" value="ECO:0007669"/>
    <property type="project" value="UniProtKB-UniRule"/>
</dbReference>
<dbReference type="GO" id="GO:0008764">
    <property type="term" value="F:UDP-N-acetylmuramoylalanine-D-glutamate ligase activity"/>
    <property type="evidence" value="ECO:0007669"/>
    <property type="project" value="UniProtKB-UniRule"/>
</dbReference>
<dbReference type="GO" id="GO:0051301">
    <property type="term" value="P:cell division"/>
    <property type="evidence" value="ECO:0007669"/>
    <property type="project" value="UniProtKB-KW"/>
</dbReference>
<dbReference type="GO" id="GO:0071555">
    <property type="term" value="P:cell wall organization"/>
    <property type="evidence" value="ECO:0007669"/>
    <property type="project" value="UniProtKB-KW"/>
</dbReference>
<dbReference type="GO" id="GO:0009252">
    <property type="term" value="P:peptidoglycan biosynthetic process"/>
    <property type="evidence" value="ECO:0007669"/>
    <property type="project" value="UniProtKB-UniRule"/>
</dbReference>
<dbReference type="GO" id="GO:0008360">
    <property type="term" value="P:regulation of cell shape"/>
    <property type="evidence" value="ECO:0007669"/>
    <property type="project" value="UniProtKB-KW"/>
</dbReference>
<dbReference type="Gene3D" id="3.90.190.20">
    <property type="entry name" value="Mur ligase, C-terminal domain"/>
    <property type="match status" value="1"/>
</dbReference>
<dbReference type="Gene3D" id="3.40.1190.10">
    <property type="entry name" value="Mur-like, catalytic domain"/>
    <property type="match status" value="1"/>
</dbReference>
<dbReference type="Gene3D" id="3.40.50.720">
    <property type="entry name" value="NAD(P)-binding Rossmann-like Domain"/>
    <property type="match status" value="1"/>
</dbReference>
<dbReference type="HAMAP" id="MF_00639">
    <property type="entry name" value="MurD"/>
    <property type="match status" value="1"/>
</dbReference>
<dbReference type="InterPro" id="IPR036565">
    <property type="entry name" value="Mur-like_cat_sf"/>
</dbReference>
<dbReference type="InterPro" id="IPR004101">
    <property type="entry name" value="Mur_ligase_C"/>
</dbReference>
<dbReference type="InterPro" id="IPR036615">
    <property type="entry name" value="Mur_ligase_C_dom_sf"/>
</dbReference>
<dbReference type="InterPro" id="IPR013221">
    <property type="entry name" value="Mur_ligase_cen"/>
</dbReference>
<dbReference type="InterPro" id="IPR005762">
    <property type="entry name" value="MurD"/>
</dbReference>
<dbReference type="NCBIfam" id="TIGR01087">
    <property type="entry name" value="murD"/>
    <property type="match status" value="1"/>
</dbReference>
<dbReference type="PANTHER" id="PTHR43692">
    <property type="entry name" value="UDP-N-ACETYLMURAMOYLALANINE--D-GLUTAMATE LIGASE"/>
    <property type="match status" value="1"/>
</dbReference>
<dbReference type="PANTHER" id="PTHR43692:SF1">
    <property type="entry name" value="UDP-N-ACETYLMURAMOYLALANINE--D-GLUTAMATE LIGASE"/>
    <property type="match status" value="1"/>
</dbReference>
<dbReference type="Pfam" id="PF02875">
    <property type="entry name" value="Mur_ligase_C"/>
    <property type="match status" value="1"/>
</dbReference>
<dbReference type="Pfam" id="PF08245">
    <property type="entry name" value="Mur_ligase_M"/>
    <property type="match status" value="1"/>
</dbReference>
<dbReference type="Pfam" id="PF21799">
    <property type="entry name" value="MurD-like_N"/>
    <property type="match status" value="1"/>
</dbReference>
<dbReference type="SUPFAM" id="SSF51984">
    <property type="entry name" value="MurCD N-terminal domain"/>
    <property type="match status" value="1"/>
</dbReference>
<dbReference type="SUPFAM" id="SSF53623">
    <property type="entry name" value="MurD-like peptide ligases, catalytic domain"/>
    <property type="match status" value="1"/>
</dbReference>
<dbReference type="SUPFAM" id="SSF53244">
    <property type="entry name" value="MurD-like peptide ligases, peptide-binding domain"/>
    <property type="match status" value="1"/>
</dbReference>
<reference key="1">
    <citation type="journal article" date="2003" name="Mol. Microbiol.">
        <title>Genome-based analysis of virulence genes in a non-biofilm-forming Staphylococcus epidermidis strain (ATCC 12228).</title>
        <authorList>
            <person name="Zhang Y.-Q."/>
            <person name="Ren S.-X."/>
            <person name="Li H.-L."/>
            <person name="Wang Y.-X."/>
            <person name="Fu G."/>
            <person name="Yang J."/>
            <person name="Qin Z.-Q."/>
            <person name="Miao Y.-G."/>
            <person name="Wang W.-Y."/>
            <person name="Chen R.-S."/>
            <person name="Shen Y."/>
            <person name="Chen Z."/>
            <person name="Yuan Z.-H."/>
            <person name="Zhao G.-P."/>
            <person name="Qu D."/>
            <person name="Danchin A."/>
            <person name="Wen Y.-M."/>
        </authorList>
    </citation>
    <scope>NUCLEOTIDE SEQUENCE [LARGE SCALE GENOMIC DNA]</scope>
    <source>
        <strain>ATCC 12228 / FDA PCI 1200</strain>
    </source>
</reference>
<feature type="chain" id="PRO_0000109090" description="UDP-N-acetylmuramoylalanine--D-glutamate ligase">
    <location>
        <begin position="1"/>
        <end position="449"/>
    </location>
</feature>
<feature type="binding site" evidence="1">
    <location>
        <begin position="118"/>
        <end position="124"/>
    </location>
    <ligand>
        <name>ATP</name>
        <dbReference type="ChEBI" id="CHEBI:30616"/>
    </ligand>
</feature>